<proteinExistence type="evidence at protein level"/>
<keyword id="KW-0002">3D-structure</keyword>
<keyword id="KW-0067">ATP-binding</keyword>
<keyword id="KW-0963">Cytoplasm</keyword>
<keyword id="KW-0378">Hydrolase</keyword>
<keyword id="KW-0391">Immunity</keyword>
<keyword id="KW-1271">Inflammasome</keyword>
<keyword id="KW-0395">Inflammatory response</keyword>
<keyword id="KW-0399">Innate immunity</keyword>
<keyword id="KW-0433">Leucine-rich repeat</keyword>
<keyword id="KW-1210">Necrosis</keyword>
<keyword id="KW-0547">Nucleotide-binding</keyword>
<keyword id="KW-0539">Nucleus</keyword>
<keyword id="KW-0645">Protease</keyword>
<keyword id="KW-1185">Reference proteome</keyword>
<keyword id="KW-0677">Repeat</keyword>
<keyword id="KW-0832">Ubl conjugation</keyword>
<reference key="1">
    <citation type="journal article" date="2010" name="PLoS Pathog.">
        <title>Susceptibility to anthrax lethal toxin-induced rat death is controlled by a single chromosome 10 locus that includes rNlrp1.</title>
        <authorList>
            <person name="Newman Z.L."/>
            <person name="Printz M.P."/>
            <person name="Liu S."/>
            <person name="Crown D."/>
            <person name="Breen L."/>
            <person name="Miller-Randolph S."/>
            <person name="Flodman P."/>
            <person name="Leppla S.H."/>
            <person name="Moayeri M."/>
        </authorList>
    </citation>
    <scope>NUCLEOTIDE SEQUENCE [MRNA]</scope>
    <scope>FUNCTION</scope>
    <scope>ACTIVITY REGULATION</scope>
    <scope>PROTEOLYTIC CLEAVAGE BY ANTHRAX LETHAL TOXIN</scope>
    <source>
        <strain evidence="16">BN-lx</strain>
        <strain evidence="15">Brown Norway</strain>
        <strain evidence="17">Dahl salt-sensitive</strain>
        <strain evidence="18">Sprague-Dawley</strain>
        <strain evidence="19">Wistar</strain>
    </source>
</reference>
<reference key="2">
    <citation type="journal article" date="2004" name="Nature">
        <title>Genome sequence of the Brown Norway rat yields insights into mammalian evolution.</title>
        <authorList>
            <person name="Gibbs R.A."/>
            <person name="Weinstock G.M."/>
            <person name="Metzker M.L."/>
            <person name="Muzny D.M."/>
            <person name="Sodergren E.J."/>
            <person name="Scherer S."/>
            <person name="Scott G."/>
            <person name="Steffen D."/>
            <person name="Worley K.C."/>
            <person name="Burch P.E."/>
            <person name="Okwuonu G."/>
            <person name="Hines S."/>
            <person name="Lewis L."/>
            <person name="Deramo C."/>
            <person name="Delgado O."/>
            <person name="Dugan-Rocha S."/>
            <person name="Miner G."/>
            <person name="Morgan M."/>
            <person name="Hawes A."/>
            <person name="Gill R."/>
            <person name="Holt R.A."/>
            <person name="Adams M.D."/>
            <person name="Amanatides P.G."/>
            <person name="Baden-Tillson H."/>
            <person name="Barnstead M."/>
            <person name="Chin S."/>
            <person name="Evans C.A."/>
            <person name="Ferriera S."/>
            <person name="Fosler C."/>
            <person name="Glodek A."/>
            <person name="Gu Z."/>
            <person name="Jennings D."/>
            <person name="Kraft C.L."/>
            <person name="Nguyen T."/>
            <person name="Pfannkoch C.M."/>
            <person name="Sitter C."/>
            <person name="Sutton G.G."/>
            <person name="Venter J.C."/>
            <person name="Woodage T."/>
            <person name="Smith D."/>
            <person name="Lee H.-M."/>
            <person name="Gustafson E."/>
            <person name="Cahill P."/>
            <person name="Kana A."/>
            <person name="Doucette-Stamm L."/>
            <person name="Weinstock K."/>
            <person name="Fechtel K."/>
            <person name="Weiss R.B."/>
            <person name="Dunn D.M."/>
            <person name="Green E.D."/>
            <person name="Blakesley R.W."/>
            <person name="Bouffard G.G."/>
            <person name="De Jong P.J."/>
            <person name="Osoegawa K."/>
            <person name="Zhu B."/>
            <person name="Marra M."/>
            <person name="Schein J."/>
            <person name="Bosdet I."/>
            <person name="Fjell C."/>
            <person name="Jones S."/>
            <person name="Krzywinski M."/>
            <person name="Mathewson C."/>
            <person name="Siddiqui A."/>
            <person name="Wye N."/>
            <person name="McPherson J."/>
            <person name="Zhao S."/>
            <person name="Fraser C.M."/>
            <person name="Shetty J."/>
            <person name="Shatsman S."/>
            <person name="Geer K."/>
            <person name="Chen Y."/>
            <person name="Abramzon S."/>
            <person name="Nierman W.C."/>
            <person name="Havlak P.H."/>
            <person name="Chen R."/>
            <person name="Durbin K.J."/>
            <person name="Egan A."/>
            <person name="Ren Y."/>
            <person name="Song X.-Z."/>
            <person name="Li B."/>
            <person name="Liu Y."/>
            <person name="Qin X."/>
            <person name="Cawley S."/>
            <person name="Cooney A.J."/>
            <person name="D'Souza L.M."/>
            <person name="Martin K."/>
            <person name="Wu J.Q."/>
            <person name="Gonzalez-Garay M.L."/>
            <person name="Jackson A.R."/>
            <person name="Kalafus K.J."/>
            <person name="McLeod M.P."/>
            <person name="Milosavljevic A."/>
            <person name="Virk D."/>
            <person name="Volkov A."/>
            <person name="Wheeler D.A."/>
            <person name="Zhang Z."/>
            <person name="Bailey J.A."/>
            <person name="Eichler E.E."/>
            <person name="Tuzun E."/>
            <person name="Birney E."/>
            <person name="Mongin E."/>
            <person name="Ureta-Vidal A."/>
            <person name="Woodwark C."/>
            <person name="Zdobnov E."/>
            <person name="Bork P."/>
            <person name="Suyama M."/>
            <person name="Torrents D."/>
            <person name="Alexandersson M."/>
            <person name="Trask B.J."/>
            <person name="Young J.M."/>
            <person name="Huang H."/>
            <person name="Wang H."/>
            <person name="Xing H."/>
            <person name="Daniels S."/>
            <person name="Gietzen D."/>
            <person name="Schmidt J."/>
            <person name="Stevens K."/>
            <person name="Vitt U."/>
            <person name="Wingrove J."/>
            <person name="Camara F."/>
            <person name="Mar Alba M."/>
            <person name="Abril J.F."/>
            <person name="Guigo R."/>
            <person name="Smit A."/>
            <person name="Dubchak I."/>
            <person name="Rubin E.M."/>
            <person name="Couronne O."/>
            <person name="Poliakov A."/>
            <person name="Huebner N."/>
            <person name="Ganten D."/>
            <person name="Goesele C."/>
            <person name="Hummel O."/>
            <person name="Kreitler T."/>
            <person name="Lee Y.-A."/>
            <person name="Monti J."/>
            <person name="Schulz H."/>
            <person name="Zimdahl H."/>
            <person name="Himmelbauer H."/>
            <person name="Lehrach H."/>
            <person name="Jacob H.J."/>
            <person name="Bromberg S."/>
            <person name="Gullings-Handley J."/>
            <person name="Jensen-Seaman M.I."/>
            <person name="Kwitek A.E."/>
            <person name="Lazar J."/>
            <person name="Pasko D."/>
            <person name="Tonellato P.J."/>
            <person name="Twigger S."/>
            <person name="Ponting C.P."/>
            <person name="Duarte J.M."/>
            <person name="Rice S."/>
            <person name="Goodstadt L."/>
            <person name="Beatson S.A."/>
            <person name="Emes R.D."/>
            <person name="Winter E.E."/>
            <person name="Webber C."/>
            <person name="Brandt P."/>
            <person name="Nyakatura G."/>
            <person name="Adetobi M."/>
            <person name="Chiaromonte F."/>
            <person name="Elnitski L."/>
            <person name="Eswara P."/>
            <person name="Hardison R.C."/>
            <person name="Hou M."/>
            <person name="Kolbe D."/>
            <person name="Makova K."/>
            <person name="Miller W."/>
            <person name="Nekrutenko A."/>
            <person name="Riemer C."/>
            <person name="Schwartz S."/>
            <person name="Taylor J."/>
            <person name="Yang S."/>
            <person name="Zhang Y."/>
            <person name="Lindpaintner K."/>
            <person name="Andrews T.D."/>
            <person name="Caccamo M."/>
            <person name="Clamp M."/>
            <person name="Clarke L."/>
            <person name="Curwen V."/>
            <person name="Durbin R.M."/>
            <person name="Eyras E."/>
            <person name="Searle S.M."/>
            <person name="Cooper G.M."/>
            <person name="Batzoglou S."/>
            <person name="Brudno M."/>
            <person name="Sidow A."/>
            <person name="Stone E.A."/>
            <person name="Payseur B.A."/>
            <person name="Bourque G."/>
            <person name="Lopez-Otin C."/>
            <person name="Puente X.S."/>
            <person name="Chakrabarti K."/>
            <person name="Chatterji S."/>
            <person name="Dewey C."/>
            <person name="Pachter L."/>
            <person name="Bray N."/>
            <person name="Yap V.B."/>
            <person name="Caspi A."/>
            <person name="Tesler G."/>
            <person name="Pevzner P.A."/>
            <person name="Haussler D."/>
            <person name="Roskin K.M."/>
            <person name="Baertsch R."/>
            <person name="Clawson H."/>
            <person name="Furey T.S."/>
            <person name="Hinrichs A.S."/>
            <person name="Karolchik D."/>
            <person name="Kent W.J."/>
            <person name="Rosenbloom K.R."/>
            <person name="Trumbower H."/>
            <person name="Weirauch M."/>
            <person name="Cooper D.N."/>
            <person name="Stenson P.D."/>
            <person name="Ma B."/>
            <person name="Brent M."/>
            <person name="Arumugam M."/>
            <person name="Shteynberg D."/>
            <person name="Copley R.R."/>
            <person name="Taylor M.S."/>
            <person name="Riethman H."/>
            <person name="Mudunuri U."/>
            <person name="Peterson J."/>
            <person name="Guyer M."/>
            <person name="Felsenfeld A."/>
            <person name="Old S."/>
            <person name="Mockrin S."/>
            <person name="Collins F.S."/>
        </authorList>
    </citation>
    <scope>NUCLEOTIDE SEQUENCE [LARGE SCALE GENOMIC DNA]</scope>
    <source>
        <strain>Brown Norway</strain>
    </source>
</reference>
<reference key="3">
    <citation type="journal article" date="2019" name="Cell Death Dis.">
        <title>DPP8/9 inhibitors are universal activators of functional NLRP1 alleles.</title>
        <authorList>
            <person name="Gai K."/>
            <person name="Okondo M.C."/>
            <person name="Rao S.D."/>
            <person name="Chui A.J."/>
            <person name="Ball D.P."/>
            <person name="Johnson D.C."/>
            <person name="Bachovchin D.A."/>
        </authorList>
    </citation>
    <scope>FUNCTION</scope>
    <scope>ACTIVITY REGULATION</scope>
</reference>
<reference key="4">
    <citation type="journal article" date="2020" name="Immunol. Rev.">
        <title>The NLRP1 and CARD8 inflammasomes.</title>
        <authorList>
            <person name="Taabazuing C.Y."/>
            <person name="Griswold A.R."/>
            <person name="Bachovchin D.A."/>
        </authorList>
    </citation>
    <scope>REVIEW</scope>
</reference>
<reference evidence="21 22" key="5">
    <citation type="journal article" date="2021" name="Nature">
        <title>Structural and biochemical mechanisms of NLRP1 inhibition by DPP9.</title>
        <authorList>
            <person name="Huang M."/>
            <person name="Zhang X."/>
            <person name="Toh G.A."/>
            <person name="Gong Q."/>
            <person name="Wang J."/>
            <person name="Han Z."/>
            <person name="Wu B."/>
            <person name="Zhong F."/>
            <person name="Chai J."/>
        </authorList>
    </citation>
    <scope>X-RAY CRYSTALLOGRAPHY (2.00 ANGSTROMS) OF 783-968 AND 969-1122 IN COMPLEX WITH DPP9</scope>
    <scope>FUNCTION</scope>
    <scope>PROTEOLYTIC CLEAVAGE</scope>
    <scope>ACTIVITY REGULATION</scope>
    <scope>MUTAGENESIS OF HIS-942 AND SER-969</scope>
</reference>
<organism>
    <name type="scientific">Rattus norvegicus</name>
    <name type="common">Rat</name>
    <dbReference type="NCBI Taxonomy" id="10116"/>
    <lineage>
        <taxon>Eukaryota</taxon>
        <taxon>Metazoa</taxon>
        <taxon>Chordata</taxon>
        <taxon>Craniata</taxon>
        <taxon>Vertebrata</taxon>
        <taxon>Euteleostomi</taxon>
        <taxon>Mammalia</taxon>
        <taxon>Eutheria</taxon>
        <taxon>Euarchontoglires</taxon>
        <taxon>Glires</taxon>
        <taxon>Rodentia</taxon>
        <taxon>Myomorpha</taxon>
        <taxon>Muroidea</taxon>
        <taxon>Muridae</taxon>
        <taxon>Murinae</taxon>
        <taxon>Rattus</taxon>
    </lineage>
</organism>
<comment type="function">
    <text evidence="1 2 3 9 10 11">Acts as the sensor component of the Nlrp1a inflammasome, which mediates inflammasome activation in response to various pathogen-associated signals, leading to subsequent pyroptosis (PubMed:33731929). Inflammasomes are supramolecular complexes that assemble in the cytosol in response to pathogens and other damage-associated signals and play critical roles in innate immunity and inflammation (By similarity). Acts as a recognition receptor (PRR): recognizes specific pathogens and other damage-associated signals, such as B.anthracis lethal toxin (LT) or Val-boroPro inhibitor, and mediates the formation of the inflammasome polymeric complex (PubMed:20502689, PubMed:31383852, PubMed:33731929). In response to pathogen-associated signals, the N-terminal part of Nlrp1a is degraded by the proteasome, releasing the cleaved C-terminal part of the protein (NACHT, LRR and PYD domains-containing protein 1a, C-terminus), which polymerizes to initiate the formation of the inflammasome complex: the inflammasome directly recruits pro-caspase-1 (proCASP1) independently of PYCARD/ASC and promotes caspase-1 (CASP1) activation, which subsequently cleaves and activates inflammatory cytokines IL1B and IL18 and gasdermin-D (GSDMD), leading to pyroptosis (By similarity). In the absence of GSDMD expression, the Nlrp1a inflammasome is able to recruit and activate CASP8, leading to activation of gasdermin-E (GSDME) (By similarity).</text>
</comment>
<comment type="function">
    <molecule>NACHT, LRR and PYD domains-containing protein 1a allele 1</molecule>
    <text evidence="3">Constitutes the precursor of the Nlrp1a inflammasome, which mediates autoproteolytic processing within the FIIND domain to generate the N-terminal and C-terminal parts, which are associated non-covalently in absence of pathogens and other damage-associated signals.</text>
</comment>
<comment type="function">
    <molecule>NACHT, LRR and PYD domains-containing protein 1a, N-terminus</molecule>
    <text evidence="3">Regulatory part that prevents formation of the Nlrp1a inflammasome: in absence of pathogens and other damage-associated signals, interacts with the C-terminal part of Nlrp1a (NACHT, LRR and PYD domains-containing protein 1a, C-terminus), preventing activation of the Nlrp1a inflammasome. In response to pathogen-associated signals, this part is ubiquitinated by the N-end rule pathway and degraded by the proteasome, releasing the cleaved C-terminal part of the protein, which polymerizes and forms the Nlrp1a inflammasome.</text>
</comment>
<comment type="function">
    <molecule>NACHT, LRR and PYD domains-containing protein 1a, C-terminus</molecule>
    <text evidence="3 11">Constitutes the active part of the Nlrp1a inflammasome (PubMed:33731929). In absence of pathogens and other damage-associated signals, interacts with the N-terminal part of Nlrp1a (NACHT, LRR and PYD domains-containing protein 1a, N-terminus), preventing activation of the Nlrp1a inflammasome. In response to pathogen-associated signals, the N-terminal part of Nlrp1a is degraded by the proteasome, releasing this form, which polymerizes to form the Nlrp1a inflammasome complex: the Nlrp1a inflammasome complex then directly recruits pro-caspase-1 (proCASP1) and promotes caspase-1 (CASP1) activation, leading to gasdermin-D (GSDMD) cleavage and subsequent pyroptosis.</text>
</comment>
<comment type="activity regulation">
    <text evidence="2 3 9 10 11">Activated by cleavage by B.anthracis lethal toxin (LT) endopeptidase (PubMed:20502689). Cleavage by LT promotes ubiquitination and degradation of the N-terminal part, releasing the cleaved C-terminal part of the protein (NACHT, LRR and PYD domains-containing protein 1a, C-terminus), which polymerizes and forms the Nlrp1a inflammasome (By similarity). Nlrp1a inflammasome is inhibited by DPP8 and DPP9, which sequester the C-terminal fragment of Nlrp1a (NACHT, LRR and PYD domains-containing protein 1a, C-terminus) in a ternary complex, thereby preventing Nlrp1a oligomerization and activation (PubMed:33731929). Nlrp1a inflammasome is weakly activated by Val-boroPro (Talabostat, PT-100), an inhibitor of dipeptidyl peptidases DPP8 and DPP9 (PubMed:31383852). Val-boroPro relieves inhibition of DPP8 and/or DPP9 by promoting disruption of the ternary complex, releasing its C-terminal part from autoinhibition (By similarity). Weakly activated by Toxoplasma gondii (PubMed:31383852).</text>
</comment>
<comment type="subunit">
    <text evidence="3 11">Interacts (via LRR repeats) with BCL2 and BCL2L1 (via the loop between motifs BH4 and BH3) (By similarity). Interacts with NOD2; this interaction is enhanced in the presence of muramyl dipeptide (MDP) and increases IL1B release (By similarity). Interacts with EIF2AK2/PKR; this interaction requires EIF2AK2 activity, is accompanied by EIF2AK2 autophosphorylation and promotes inflammasome assembly in response to danger-associated signals (By similarity). Interacts with MEFV; this interaction targets Nlrp1a to degradation by autophagy, hence preventing excessive IL1B- and IL18-mediated inflammation (By similarity). Interacts with DPP9; leading to inhibit activation of the inflammasome (PubMed:33731929). DPP9 acts via formation of a ternary complex, composed of a DPP9 homodimer, one full-length NLRP1 protein, and one cleaved C-terminus of Nlrp1a (NACHT, LRR and PYD domains-containing protein 1a, C-terminus) (PubMed:33731929). Interacts with DPP8; leading to inhibit activation of the inflammasome, probably via formation of a ternary complex with DPP8 (By similarity).</text>
</comment>
<comment type="subunit">
    <molecule>NACHT, LRR and PYD domains-containing protein 1a, N-terminus</molecule>
    <text evidence="3">Interacts with the C-terminal part of Nlrp1a (NACHT, LRR and PYD domains-containing protein 1a, C-terminus) in absence of pathogens and other damage-associated signals.</text>
</comment>
<comment type="subunit">
    <molecule>NACHT, LRR and PYD domains-containing protein 1a, C-terminus</molecule>
    <text evidence="3">Interacts with the N-terminal part of Nlrp1a (NACHT, LRR and PYD domains-containing protein 1a, N-terminus) in absence of pathogens and other damage-associated signals (By similarity). Homomultimer; forms the Nlrp1a inflammasome polymeric complex, a filament composed of homopolymers of this form in response to pathogens and other damage-associated signals (By similarity). The Nlrp1a inflammasome polymeric complex directly recruits pro-caspase-1 (proCASP1) independently of PYCARD/ASC (By similarity). Interacts (via CARD domain) with CASP1 (via CARD domain); leading to CASP1 activation (By similarity).</text>
</comment>
<comment type="subcellular location">
    <subcellularLocation>
        <location evidence="3">Cytoplasm</location>
        <location evidence="3">Cytosol</location>
    </subcellularLocation>
    <subcellularLocation>
        <location evidence="3">Cytoplasm</location>
    </subcellularLocation>
    <subcellularLocation>
        <location evidence="3">Nucleus</location>
    </subcellularLocation>
</comment>
<comment type="subcellular location">
    <molecule>NACHT, LRR and PYD domains-containing protein 1a, C-terminus</molecule>
    <subcellularLocation>
        <location evidence="3">Inflammasome</location>
    </subcellularLocation>
</comment>
<comment type="domain">
    <text evidence="2">The leucine-rich repeat (LRR) domain may be involved in autoinhibition in the absence of activating signal, possibly through intramolecular interaction with the NACHT domain.</text>
</comment>
<comment type="domain">
    <text evidence="2">The FIIND (domain with function to find) region is involved in homomerization, but not in CASP1-binding. Autocatalytic cleavage in this region occurs constitutively, prior to activation signals, and is required for inflammasome activity (IL1B release), possibly by facilitating CASP1 binding. Both N- and C-terminal fragments remain associated.</text>
</comment>
<comment type="domain">
    <molecule>NACHT, LRR and PYD domains-containing protein 1a, C-terminus</molecule>
    <text evidence="3">The C-terminal part of Nlrp1a oligomerizes to form the core of the Nlrp1a inflammasome filament: in the filament, the CARD domains form a central helical filaments that are promoted by oligomerized, but flexibly linked, UPA regions surrounding the filaments. The UPA region reduces the threshold needed for filament formation and signaling.</text>
</comment>
<comment type="PTM">
    <molecule>NACHT, LRR and PYD domains-containing protein 1a allele 1</molecule>
    <text evidence="3">Autocatalytically cleaved. Autocatalytic cleavage in FIIND region occurs constitutively, prior to activation signals, and is required for inflammasome activity (IL1B release), possibly by facilitating CASP1 binding. Both N- and C-terminal parts remain associated non-covalently.</text>
</comment>
<comment type="PTM">
    <molecule>NACHT, LRR and PYD domains-containing protein 1a, N-terminus</molecule>
    <text evidence="14">(Microbial infection) Cleavage by B.anthracis lethal toxin (LT) endopeptidase promotes ubiquitination and degradation of the N-terminal part, releasing the cleaved C-terminal part of the protein (NACHT, LRR and PYD domains-containing protein 1a, C-terminus), which polymerizes and forms the Nlrp1a inflammasome.</text>
</comment>
<comment type="PTM">
    <molecule>NACHT, LRR and PYD domains-containing protein 1a, N-terminus</molecule>
    <text evidence="3">Ubiquitinated in response to pathogen-associated signals, leading to its degradation by the proteasome and subsequent release of the cleaved C-terminal part of the protein (NACHT, LRR and PYD domains-containing protein 1a, C-terminus), which polymerizes and forms the Nlrp1a inflammasome.</text>
</comment>
<comment type="polymorphism">
    <text evidence="9">Nlrp1a gene is extremely polymorphic. 5 alleles have been described: 1 (this entry), 2 (AC D9I2G3), 3 (AC D9I2H0), 4 (AC D9I2G1) and 5 (AC D9I2G4).</text>
</comment>
<comment type="similarity">
    <text evidence="13">Belongs to the NLRP family.</text>
</comment>
<feature type="chain" id="PRO_0000452878" description="NACHT, LRR and PYD domains-containing protein 1a allele 1">
    <location>
        <begin position="1"/>
        <end position="1218"/>
    </location>
</feature>
<feature type="chain" id="PRO_0000452879" description="NACHT, LRR and PYD domains-containing protein 1a, N-terminus" evidence="3">
    <location>
        <begin position="1"/>
        <end position="968"/>
    </location>
</feature>
<feature type="chain" id="PRO_0000452880" description="NACHT, LRR and PYD domains-containing protein 1a, C-terminus" evidence="3">
    <location>
        <begin position="969"/>
        <end position="1218"/>
    </location>
</feature>
<feature type="domain" description="NACHT" evidence="6">
    <location>
        <begin position="175"/>
        <end position="484"/>
    </location>
</feature>
<feature type="repeat" description="LRR 1" evidence="4">
    <location>
        <begin position="343"/>
        <end position="364"/>
    </location>
</feature>
<feature type="repeat" description="LRR 2" evidence="4">
    <location>
        <begin position="673"/>
        <end position="693"/>
    </location>
</feature>
<feature type="repeat" description="LRR 3" evidence="4">
    <location>
        <begin position="730"/>
        <end position="750"/>
    </location>
</feature>
<feature type="domain" description="FIIND" evidence="7">
    <location>
        <begin position="835"/>
        <end position="1118"/>
    </location>
</feature>
<feature type="domain" description="CARD" evidence="5">
    <location>
        <begin position="1122"/>
        <end position="1211"/>
    </location>
</feature>
<feature type="region of interest" description="Disordered" evidence="8">
    <location>
        <begin position="1"/>
        <end position="61"/>
    </location>
</feature>
<feature type="region of interest" description="Disordered" evidence="8">
    <location>
        <begin position="799"/>
        <end position="842"/>
    </location>
</feature>
<feature type="region of interest" description="ZU5" evidence="3">
    <location>
        <begin position="835"/>
        <end position="968"/>
    </location>
</feature>
<feature type="region of interest" description="UPA" evidence="3">
    <location>
        <begin position="969"/>
        <end position="1118"/>
    </location>
</feature>
<feature type="compositionally biased region" description="Polar residues" evidence="8">
    <location>
        <begin position="7"/>
        <end position="29"/>
    </location>
</feature>
<feature type="compositionally biased region" description="Polar residues" evidence="8">
    <location>
        <begin position="799"/>
        <end position="815"/>
    </location>
</feature>
<feature type="binding site" evidence="6">
    <location>
        <begin position="181"/>
        <end position="188"/>
    </location>
    <ligand>
        <name>ATP</name>
        <dbReference type="ChEBI" id="CHEBI:30616"/>
    </ligand>
</feature>
<feature type="site" description="Trigger for autolytic processing" evidence="11">
    <location>
        <position position="942"/>
    </location>
</feature>
<feature type="site" description="Cleavage; by autolysis" evidence="7 11">
    <location>
        <begin position="968"/>
        <end position="969"/>
    </location>
</feature>
<feature type="mutagenesis site" description="Complete loss of autocatalytic processing." evidence="11">
    <original>H</original>
    <variation>E</variation>
    <location>
        <position position="942"/>
    </location>
</feature>
<feature type="mutagenesis site" description="Abolished autolytic processing." evidence="11">
    <original>S</original>
    <variation>A</variation>
    <location>
        <position position="969"/>
    </location>
</feature>
<feature type="helix" evidence="23">
    <location>
        <begin position="831"/>
        <end position="833"/>
    </location>
</feature>
<feature type="strand" evidence="23">
    <location>
        <begin position="835"/>
        <end position="837"/>
    </location>
</feature>
<feature type="strand" evidence="23">
    <location>
        <begin position="840"/>
        <end position="842"/>
    </location>
</feature>
<feature type="strand" evidence="23">
    <location>
        <begin position="845"/>
        <end position="848"/>
    </location>
</feature>
<feature type="turn" evidence="23">
    <location>
        <begin position="849"/>
        <end position="852"/>
    </location>
</feature>
<feature type="strand" evidence="23">
    <location>
        <begin position="853"/>
        <end position="858"/>
    </location>
</feature>
<feature type="strand" evidence="23">
    <location>
        <begin position="860"/>
        <end position="865"/>
    </location>
</feature>
<feature type="turn" evidence="23">
    <location>
        <begin position="867"/>
        <end position="869"/>
    </location>
</feature>
<feature type="strand" evidence="23">
    <location>
        <begin position="872"/>
        <end position="877"/>
    </location>
</feature>
<feature type="strand" evidence="23">
    <location>
        <begin position="879"/>
        <end position="886"/>
    </location>
</feature>
<feature type="helix" evidence="23">
    <location>
        <begin position="888"/>
        <end position="890"/>
    </location>
</feature>
<feature type="helix" evidence="23">
    <location>
        <begin position="898"/>
        <end position="900"/>
    </location>
</feature>
<feature type="strand" evidence="23">
    <location>
        <begin position="901"/>
        <end position="903"/>
    </location>
</feature>
<feature type="strand" evidence="23">
    <location>
        <begin position="907"/>
        <end position="911"/>
    </location>
</feature>
<feature type="strand" evidence="23">
    <location>
        <begin position="916"/>
        <end position="923"/>
    </location>
</feature>
<feature type="helix" evidence="23">
    <location>
        <begin position="935"/>
        <end position="937"/>
    </location>
</feature>
<feature type="strand" evidence="23">
    <location>
        <begin position="938"/>
        <end position="944"/>
    </location>
</feature>
<feature type="strand" evidence="23">
    <location>
        <begin position="947"/>
        <end position="951"/>
    </location>
</feature>
<feature type="strand" evidence="23">
    <location>
        <begin position="954"/>
        <end position="956"/>
    </location>
</feature>
<feature type="strand" evidence="23">
    <location>
        <begin position="958"/>
        <end position="965"/>
    </location>
</feature>
<feature type="strand" evidence="23">
    <location>
        <begin position="970"/>
        <end position="976"/>
    </location>
</feature>
<feature type="turn" evidence="23">
    <location>
        <begin position="979"/>
        <end position="983"/>
    </location>
</feature>
<feature type="strand" evidence="23">
    <location>
        <begin position="989"/>
        <end position="998"/>
    </location>
</feature>
<feature type="strand" evidence="23">
    <location>
        <begin position="1001"/>
        <end position="1011"/>
    </location>
</feature>
<feature type="helix" evidence="23">
    <location>
        <begin position="1013"/>
        <end position="1024"/>
    </location>
</feature>
<feature type="turn" evidence="23">
    <location>
        <begin position="1025"/>
        <end position="1027"/>
    </location>
</feature>
<feature type="strand" evidence="23">
    <location>
        <begin position="1029"/>
        <end position="1031"/>
    </location>
</feature>
<feature type="strand" evidence="23">
    <location>
        <begin position="1045"/>
        <end position="1049"/>
    </location>
</feature>
<feature type="strand" evidence="23">
    <location>
        <begin position="1054"/>
        <end position="1057"/>
    </location>
</feature>
<feature type="strand" evidence="23">
    <location>
        <begin position="1059"/>
        <end position="1062"/>
    </location>
</feature>
<feature type="strand" evidence="23">
    <location>
        <begin position="1075"/>
        <end position="1080"/>
    </location>
</feature>
<feature type="strand" evidence="23">
    <location>
        <begin position="1086"/>
        <end position="1092"/>
    </location>
</feature>
<feature type="turn" evidence="23">
    <location>
        <begin position="1093"/>
        <end position="1095"/>
    </location>
</feature>
<feature type="strand" evidence="23">
    <location>
        <begin position="1098"/>
        <end position="1104"/>
    </location>
</feature>
<feature type="helix" evidence="23">
    <location>
        <begin position="1106"/>
        <end position="1108"/>
    </location>
</feature>
<gene>
    <name evidence="20" type="primary">Nlrp1a</name>
    <name evidence="12" type="synonym">Nlrp1</name>
</gene>
<accession>D9I2F9</accession>
<accession>A0A0G2QC28</accession>
<accession>F1LPA5</accession>
<name>NL1A1_RAT</name>
<sequence>MEESQSKQESNTRVAQHGSQQDVDPTFQTKRALEKERSKPRPRPLPRVQLQSLPGWSSTSNDVPLSQLIREMDHESRRCIHRSKKKLDRSEHISQGTIPEIYEKRKETISHTQSMEQKYLFQNFTKLLLLQKCCPGGSEKLVRESWHPCVPEEGGHMIEIQDLFDPNLDTEKKPQLVIIEGAAGIGKSTLARQVKRAWDEGQLYRDRFQHVFFFSCRELAQCKQLSLAELIAQGQEVPTAPTRQILSRPEKLLFILDGIDEPAWVLEDQNPELCVHWSQAQPVHTLLGSLLGKSILPEASLMLTARTTALQKLVPSLGQPHRVEVLGFSEFERKDYFYKYFAKERNTIIDFNLIGSIPVLLTLCEVPWVCWLLCTCLEKQMQQGEVLSLTSQTTTALCLKYLSLTIPGQHLSTQLRTLCSLAAEGICQRRTLFSKSDLCKQGLAEDAIATFLKIGVLQRQPSSLSYSFAHLCLQEFFAAMSYILEDSEEAHGDMGNDRTVETLVERYGRQNLFEAPTVRFLLGLLNTREMREMENIFACKFPWETKLKLLQSIIGEPFCQPCHLGLFHCLYENQEEELLTETMLCFPLTASGPNHMEATVFQTNVKRLVIQTDMELMVVTFCITFSHVRSLRLKGKGQQEYKLTAPAMVLYRWTPISEASWKVLFSNLKCTRNLEELDLSGNPLSYSAVRSLCTALRQPGCRLKTLWLVDCGLTSRCCSFLASMLSAHSRLAELDLRLNDLGDNGVRQLCEGLRNPACNLSILRLDQASLSEQVITELRALETKNPKLFISSTWMSHMTMPTENTDGEESLTSSKQQQQQSGDKHMEPLGTDDDFWGPSGPVSTEVVDRERNLYRVRLPMAGSYHCPSTGLHFVVTRAVTIEIGFCAWSQFLHETPLQHSHMVAGPLFDIKAEHGAVTAVCLPHFVSLQEGKVDSSLFHVAHFQDHGMVLETPARVEPHFAVLENPSFSPMGVLLRMIPAVGHFIPITSITLIYYRLYLEDITFHLYLVPNDCTIRKAIDEEELKFQFVRINKPPPVDALYVGSRYIVSSSKEVEILPKELELCYRSPRESQLFSEIYVGNIGSGINLQLTDKKYMNLIWEALLKPGDLRPALPRMASAPKDAPALLHFVDQHREQLVARVTSVDPLLDKLHGLVLSEEDYETVRAEATNQDKMRKLFRGSRSWSWDCKDHFYQALKETHPHLIMDLLEKSGGVSVRL</sequence>
<protein>
    <recommendedName>
        <fullName evidence="13">NACHT, LRR and PYD domains-containing protein 1a allele 1</fullName>
        <ecNumber evidence="3">3.4.-.-</ecNumber>
    </recommendedName>
    <component>
        <recommendedName>
            <fullName evidence="13">NACHT, LRR and PYD domains-containing protein 1a, C-terminus</fullName>
            <shortName evidence="3">Nlrp1a-CT</shortName>
        </recommendedName>
    </component>
    <component>
        <recommendedName>
            <fullName evidence="13">NACHT, LRR and PYD domains-containing protein 1a, N-terminus</fullName>
            <shortName evidence="3">Nlrp1a-NT</shortName>
        </recommendedName>
    </component>
</protein>
<dbReference type="EC" id="3.4.-.-" evidence="3"/>
<dbReference type="EMBL" id="AABR07029887">
    <property type="status" value="NOT_ANNOTATED_CDS"/>
    <property type="molecule type" value="Genomic_DNA"/>
</dbReference>
<dbReference type="EMBL" id="AABR07029888">
    <property type="status" value="NOT_ANNOTATED_CDS"/>
    <property type="molecule type" value="Genomic_DNA"/>
</dbReference>
<dbReference type="EMBL" id="AABR07029889">
    <property type="status" value="NOT_ANNOTATED_CDS"/>
    <property type="molecule type" value="Genomic_DNA"/>
</dbReference>
<dbReference type="EMBL" id="AC095695">
    <property type="status" value="NOT_ANNOTATED_CDS"/>
    <property type="molecule type" value="Genomic_DNA"/>
</dbReference>
<dbReference type="EMBL" id="HM060628">
    <property type="protein sequence ID" value="ADI96225.1"/>
    <property type="molecule type" value="mRNA"/>
</dbReference>
<dbReference type="EMBL" id="HM060629">
    <property type="protein sequence ID" value="ADI96226.1"/>
    <property type="molecule type" value="mRNA"/>
</dbReference>
<dbReference type="EMBL" id="HM060631">
    <property type="protein sequence ID" value="ADI96228.1"/>
    <property type="molecule type" value="mRNA"/>
</dbReference>
<dbReference type="EMBL" id="HM060634">
    <property type="protein sequence ID" value="ADI96231.1"/>
    <property type="molecule type" value="mRNA"/>
</dbReference>
<dbReference type="EMBL" id="HM060637">
    <property type="protein sequence ID" value="ADI96234.1"/>
    <property type="molecule type" value="mRNA"/>
</dbReference>
<dbReference type="RefSeq" id="NP_001139227.2">
    <property type="nucleotide sequence ID" value="NM_001145755.2"/>
</dbReference>
<dbReference type="RefSeq" id="XP_006246817.1">
    <property type="nucleotide sequence ID" value="XM_006246755.5"/>
</dbReference>
<dbReference type="PDB" id="7CRV">
    <property type="method" value="X-ray"/>
    <property type="resolution" value="2.00 A"/>
    <property type="chains" value="A/C=783-968, B/D=969-1122"/>
</dbReference>
<dbReference type="PDB" id="7CRW">
    <property type="method" value="EM"/>
    <property type="resolution" value="3.18 A"/>
    <property type="chains" value="A/B=1-1218"/>
</dbReference>
<dbReference type="PDBsum" id="7CRV"/>
<dbReference type="PDBsum" id="7CRW"/>
<dbReference type="SMR" id="D9I2F9"/>
<dbReference type="FunCoup" id="D9I2F9">
    <property type="interactions" value="224"/>
</dbReference>
<dbReference type="STRING" id="10116.ENSRNOP00000034130"/>
<dbReference type="iPTMnet" id="D9I2F9"/>
<dbReference type="PhosphoSitePlus" id="D9I2F9"/>
<dbReference type="PaxDb" id="10116-ENSRNOP00000034130"/>
<dbReference type="PeptideAtlas" id="D9I2F9"/>
<dbReference type="GeneID" id="360557"/>
<dbReference type="KEGG" id="rno:360557"/>
<dbReference type="UCSC" id="RGD:1310963">
    <property type="organism name" value="rat"/>
</dbReference>
<dbReference type="AGR" id="RGD:1310963"/>
<dbReference type="CTD" id="195046"/>
<dbReference type="RGD" id="1310963">
    <property type="gene designation" value="Nlrp1a"/>
</dbReference>
<dbReference type="VEuPathDB" id="HostDB:ENSRNOG00000023143"/>
<dbReference type="eggNOG" id="ENOG502S4A4">
    <property type="taxonomic scope" value="Eukaryota"/>
</dbReference>
<dbReference type="InParanoid" id="D9I2F9"/>
<dbReference type="OrthoDB" id="88188at9989"/>
<dbReference type="TreeFam" id="TF340267"/>
<dbReference type="Reactome" id="R-RNO-844455">
    <property type="pathway name" value="The NLRP1 inflammasome"/>
</dbReference>
<dbReference type="Proteomes" id="UP000002494">
    <property type="component" value="Chromosome 10"/>
</dbReference>
<dbReference type="ExpressionAtlas" id="D9I2F9">
    <property type="expression patterns" value="baseline"/>
</dbReference>
<dbReference type="GO" id="GO:0005829">
    <property type="term" value="C:cytosol"/>
    <property type="evidence" value="ECO:0000266"/>
    <property type="project" value="RGD"/>
</dbReference>
<dbReference type="GO" id="GO:0043025">
    <property type="term" value="C:neuronal cell body"/>
    <property type="evidence" value="ECO:0000314"/>
    <property type="project" value="RGD"/>
</dbReference>
<dbReference type="GO" id="GO:0072558">
    <property type="term" value="C:NLRP1 inflammasome complex"/>
    <property type="evidence" value="ECO:0000250"/>
    <property type="project" value="UniProtKB"/>
</dbReference>
<dbReference type="GO" id="GO:0072559">
    <property type="term" value="C:NLRP3 inflammasome complex"/>
    <property type="evidence" value="ECO:0000318"/>
    <property type="project" value="GO_Central"/>
</dbReference>
<dbReference type="GO" id="GO:0005634">
    <property type="term" value="C:nucleus"/>
    <property type="evidence" value="ECO:0000266"/>
    <property type="project" value="RGD"/>
</dbReference>
<dbReference type="GO" id="GO:0032991">
    <property type="term" value="C:protein-containing complex"/>
    <property type="evidence" value="ECO:0000314"/>
    <property type="project" value="RGD"/>
</dbReference>
<dbReference type="GO" id="GO:0005524">
    <property type="term" value="F:ATP binding"/>
    <property type="evidence" value="ECO:0000266"/>
    <property type="project" value="RGD"/>
</dbReference>
<dbReference type="GO" id="GO:0016887">
    <property type="term" value="F:ATP hydrolysis activity"/>
    <property type="evidence" value="ECO:0000266"/>
    <property type="project" value="RGD"/>
</dbReference>
<dbReference type="GO" id="GO:0140608">
    <property type="term" value="F:cysteine-type endopeptidase activator activity"/>
    <property type="evidence" value="ECO:0000250"/>
    <property type="project" value="UniProtKB"/>
</dbReference>
<dbReference type="GO" id="GO:0003690">
    <property type="term" value="F:double-stranded DNA binding"/>
    <property type="evidence" value="ECO:0000266"/>
    <property type="project" value="RGD"/>
</dbReference>
<dbReference type="GO" id="GO:0003725">
    <property type="term" value="F:double-stranded RNA binding"/>
    <property type="evidence" value="ECO:0000266"/>
    <property type="project" value="RGD"/>
</dbReference>
<dbReference type="GO" id="GO:0019899">
    <property type="term" value="F:enzyme binding"/>
    <property type="evidence" value="ECO:0000266"/>
    <property type="project" value="RGD"/>
</dbReference>
<dbReference type="GO" id="GO:0140693">
    <property type="term" value="F:molecular condensate scaffold activity"/>
    <property type="evidence" value="ECO:0000266"/>
    <property type="project" value="RGD"/>
</dbReference>
<dbReference type="GO" id="GO:0038187">
    <property type="term" value="F:pattern recognition receptor activity"/>
    <property type="evidence" value="ECO:0000266"/>
    <property type="project" value="RGD"/>
</dbReference>
<dbReference type="GO" id="GO:0008233">
    <property type="term" value="F:peptidase activity"/>
    <property type="evidence" value="ECO:0007669"/>
    <property type="project" value="UniProtKB-KW"/>
</dbReference>
<dbReference type="GO" id="GO:0019904">
    <property type="term" value="F:protein domain specific binding"/>
    <property type="evidence" value="ECO:0000266"/>
    <property type="project" value="RGD"/>
</dbReference>
<dbReference type="GO" id="GO:0097110">
    <property type="term" value="F:scaffold protein binding"/>
    <property type="evidence" value="ECO:0000353"/>
    <property type="project" value="RGD"/>
</dbReference>
<dbReference type="GO" id="GO:0035591">
    <property type="term" value="F:signaling adaptor activity"/>
    <property type="evidence" value="ECO:0000266"/>
    <property type="project" value="RGD"/>
</dbReference>
<dbReference type="GO" id="GO:0002218">
    <property type="term" value="P:activation of innate immune response"/>
    <property type="evidence" value="ECO:0000318"/>
    <property type="project" value="GO_Central"/>
</dbReference>
<dbReference type="GO" id="GO:0140374">
    <property type="term" value="P:antiviral innate immune response"/>
    <property type="evidence" value="ECO:0000266"/>
    <property type="project" value="RGD"/>
</dbReference>
<dbReference type="GO" id="GO:0071493">
    <property type="term" value="P:cellular response to UV-B"/>
    <property type="evidence" value="ECO:0000266"/>
    <property type="project" value="RGD"/>
</dbReference>
<dbReference type="GO" id="GO:0042742">
    <property type="term" value="P:defense response to bacterium"/>
    <property type="evidence" value="ECO:0000266"/>
    <property type="project" value="RGD"/>
</dbReference>
<dbReference type="GO" id="GO:0051607">
    <property type="term" value="P:defense response to virus"/>
    <property type="evidence" value="ECO:0000266"/>
    <property type="project" value="RGD"/>
</dbReference>
<dbReference type="GO" id="GO:0006954">
    <property type="term" value="P:inflammatory response"/>
    <property type="evidence" value="ECO:0000318"/>
    <property type="project" value="GO_Central"/>
</dbReference>
<dbReference type="GO" id="GO:0097193">
    <property type="term" value="P:intrinsic apoptotic signaling pathway"/>
    <property type="evidence" value="ECO:0000318"/>
    <property type="project" value="GO_Central"/>
</dbReference>
<dbReference type="GO" id="GO:0051245">
    <property type="term" value="P:negative regulation of cellular defense response"/>
    <property type="evidence" value="ECO:0000315"/>
    <property type="project" value="RGD"/>
</dbReference>
<dbReference type="GO" id="GO:0051402">
    <property type="term" value="P:neuron apoptotic process"/>
    <property type="evidence" value="ECO:0000266"/>
    <property type="project" value="RGD"/>
</dbReference>
<dbReference type="GO" id="GO:1904784">
    <property type="term" value="P:NLRP1 inflammasome complex assembly"/>
    <property type="evidence" value="ECO:0000266"/>
    <property type="project" value="RGD"/>
</dbReference>
<dbReference type="GO" id="GO:0050729">
    <property type="term" value="P:positive regulation of inflammatory response"/>
    <property type="evidence" value="ECO:0000266"/>
    <property type="project" value="RGD"/>
</dbReference>
<dbReference type="GO" id="GO:0032731">
    <property type="term" value="P:positive regulation of interleukin-1 beta production"/>
    <property type="evidence" value="ECO:0000266"/>
    <property type="project" value="RGD"/>
</dbReference>
<dbReference type="GO" id="GO:0140639">
    <property type="term" value="P:positive regulation of pyroptotic inflammatory response"/>
    <property type="evidence" value="ECO:0000315"/>
    <property type="project" value="RGD"/>
</dbReference>
<dbReference type="GO" id="GO:0097300">
    <property type="term" value="P:programmed necrotic cell death"/>
    <property type="evidence" value="ECO:0000266"/>
    <property type="project" value="RGD"/>
</dbReference>
<dbReference type="GO" id="GO:0051260">
    <property type="term" value="P:protein homooligomerization"/>
    <property type="evidence" value="ECO:0000250"/>
    <property type="project" value="UniProtKB"/>
</dbReference>
<dbReference type="GO" id="GO:0070269">
    <property type="term" value="P:pyroptotic inflammatory response"/>
    <property type="evidence" value="ECO:0000266"/>
    <property type="project" value="RGD"/>
</dbReference>
<dbReference type="GO" id="GO:0042981">
    <property type="term" value="P:regulation of apoptotic process"/>
    <property type="evidence" value="ECO:0007669"/>
    <property type="project" value="InterPro"/>
</dbReference>
<dbReference type="GO" id="GO:0050727">
    <property type="term" value="P:regulation of inflammatory response"/>
    <property type="evidence" value="ECO:0000266"/>
    <property type="project" value="RGD"/>
</dbReference>
<dbReference type="GO" id="GO:0032495">
    <property type="term" value="P:response to muramyl dipeptide"/>
    <property type="evidence" value="ECO:0000266"/>
    <property type="project" value="RGD"/>
</dbReference>
<dbReference type="GO" id="GO:0097264">
    <property type="term" value="P:self proteolysis"/>
    <property type="evidence" value="ECO:0000266"/>
    <property type="project" value="RGD"/>
</dbReference>
<dbReference type="GO" id="GO:0007165">
    <property type="term" value="P:signal transduction"/>
    <property type="evidence" value="ECO:0000266"/>
    <property type="project" value="RGD"/>
</dbReference>
<dbReference type="CDD" id="cd08330">
    <property type="entry name" value="CARD_ASC_NALP1"/>
    <property type="match status" value="1"/>
</dbReference>
<dbReference type="FunFam" id="1.10.533.10:FF:000013">
    <property type="entry name" value="Apoptosis-associated speck-like protein containing a CARD"/>
    <property type="match status" value="1"/>
</dbReference>
<dbReference type="FunFam" id="3.40.50.300:FF:000897">
    <property type="entry name" value="NLR family pyrin domain containing 1"/>
    <property type="match status" value="1"/>
</dbReference>
<dbReference type="Gene3D" id="1.10.533.10">
    <property type="entry name" value="Death Domain, Fas"/>
    <property type="match status" value="1"/>
</dbReference>
<dbReference type="Gene3D" id="3.40.50.300">
    <property type="entry name" value="P-loop containing nucleotide triphosphate hydrolases"/>
    <property type="match status" value="1"/>
</dbReference>
<dbReference type="Gene3D" id="3.80.10.10">
    <property type="entry name" value="Ribonuclease Inhibitor"/>
    <property type="match status" value="1"/>
</dbReference>
<dbReference type="InterPro" id="IPR001315">
    <property type="entry name" value="CARD"/>
</dbReference>
<dbReference type="InterPro" id="IPR033516">
    <property type="entry name" value="CARD8/ASC/NALP1_CARD"/>
</dbReference>
<dbReference type="InterPro" id="IPR011029">
    <property type="entry name" value="DEATH-like_dom_sf"/>
</dbReference>
<dbReference type="InterPro" id="IPR025307">
    <property type="entry name" value="FIIND_dom"/>
</dbReference>
<dbReference type="InterPro" id="IPR001611">
    <property type="entry name" value="Leu-rich_rpt"/>
</dbReference>
<dbReference type="InterPro" id="IPR032675">
    <property type="entry name" value="LRR_dom_sf"/>
</dbReference>
<dbReference type="InterPro" id="IPR007111">
    <property type="entry name" value="NACHT_NTPase"/>
</dbReference>
<dbReference type="InterPro" id="IPR041267">
    <property type="entry name" value="NLRP_HD2"/>
</dbReference>
<dbReference type="InterPro" id="IPR051249">
    <property type="entry name" value="NLRP_Inflammasome"/>
</dbReference>
<dbReference type="InterPro" id="IPR041075">
    <property type="entry name" value="NOD1/2_WH"/>
</dbReference>
<dbReference type="InterPro" id="IPR027417">
    <property type="entry name" value="P-loop_NTPase"/>
</dbReference>
<dbReference type="PANTHER" id="PTHR46985">
    <property type="entry name" value="NACHT, LRR AND PYD DOMAINS-CONTAINING PROTEIN 1"/>
    <property type="match status" value="1"/>
</dbReference>
<dbReference type="PANTHER" id="PTHR46985:SF3">
    <property type="entry name" value="NACHT, LRR AND PYD DOMAINS-CONTAINING PROTEIN 1"/>
    <property type="match status" value="1"/>
</dbReference>
<dbReference type="Pfam" id="PF00619">
    <property type="entry name" value="CARD"/>
    <property type="match status" value="1"/>
</dbReference>
<dbReference type="Pfam" id="PF13553">
    <property type="entry name" value="FIIND"/>
    <property type="match status" value="1"/>
</dbReference>
<dbReference type="Pfam" id="PF13516">
    <property type="entry name" value="LRR_6"/>
    <property type="match status" value="2"/>
</dbReference>
<dbReference type="Pfam" id="PF05729">
    <property type="entry name" value="NACHT"/>
    <property type="match status" value="1"/>
</dbReference>
<dbReference type="Pfam" id="PF17776">
    <property type="entry name" value="NLRC4_HD2"/>
    <property type="match status" value="1"/>
</dbReference>
<dbReference type="Pfam" id="PF17779">
    <property type="entry name" value="NOD2_WH"/>
    <property type="match status" value="1"/>
</dbReference>
<dbReference type="Pfam" id="PF23679">
    <property type="entry name" value="UPA-FIIND"/>
    <property type="match status" value="1"/>
</dbReference>
<dbReference type="PRINTS" id="PR00364">
    <property type="entry name" value="DISEASERSIST"/>
</dbReference>
<dbReference type="SMART" id="SM00368">
    <property type="entry name" value="LRR_RI"/>
    <property type="match status" value="3"/>
</dbReference>
<dbReference type="SUPFAM" id="SSF47986">
    <property type="entry name" value="DEATH domain"/>
    <property type="match status" value="1"/>
</dbReference>
<dbReference type="SUPFAM" id="SSF52540">
    <property type="entry name" value="P-loop containing nucleoside triphosphate hydrolases"/>
    <property type="match status" value="1"/>
</dbReference>
<dbReference type="SUPFAM" id="SSF52047">
    <property type="entry name" value="RNI-like"/>
    <property type="match status" value="1"/>
</dbReference>
<dbReference type="PROSITE" id="PS50209">
    <property type="entry name" value="CARD"/>
    <property type="match status" value="1"/>
</dbReference>
<dbReference type="PROSITE" id="PS51830">
    <property type="entry name" value="FIIND"/>
    <property type="match status" value="1"/>
</dbReference>
<dbReference type="PROSITE" id="PS50837">
    <property type="entry name" value="NACHT"/>
    <property type="match status" value="1"/>
</dbReference>
<evidence type="ECO:0000250" key="1">
    <source>
        <dbReference type="UniProtKB" id="Q2LKU9"/>
    </source>
</evidence>
<evidence type="ECO:0000250" key="2">
    <source>
        <dbReference type="UniProtKB" id="Q2LKW6"/>
    </source>
</evidence>
<evidence type="ECO:0000250" key="3">
    <source>
        <dbReference type="UniProtKB" id="Q9C000"/>
    </source>
</evidence>
<evidence type="ECO:0000255" key="4"/>
<evidence type="ECO:0000255" key="5">
    <source>
        <dbReference type="PROSITE-ProRule" id="PRU00046"/>
    </source>
</evidence>
<evidence type="ECO:0000255" key="6">
    <source>
        <dbReference type="PROSITE-ProRule" id="PRU00136"/>
    </source>
</evidence>
<evidence type="ECO:0000255" key="7">
    <source>
        <dbReference type="PROSITE-ProRule" id="PRU01174"/>
    </source>
</evidence>
<evidence type="ECO:0000256" key="8">
    <source>
        <dbReference type="SAM" id="MobiDB-lite"/>
    </source>
</evidence>
<evidence type="ECO:0000269" key="9">
    <source>
    </source>
</evidence>
<evidence type="ECO:0000269" key="10">
    <source>
    </source>
</evidence>
<evidence type="ECO:0000269" key="11">
    <source>
    </source>
</evidence>
<evidence type="ECO:0000303" key="12">
    <source>
    </source>
</evidence>
<evidence type="ECO:0000305" key="13"/>
<evidence type="ECO:0000305" key="14">
    <source>
    </source>
</evidence>
<evidence type="ECO:0000312" key="15">
    <source>
        <dbReference type="EMBL" id="ADI96225.1"/>
    </source>
</evidence>
<evidence type="ECO:0000312" key="16">
    <source>
        <dbReference type="EMBL" id="ADI96226.1"/>
    </source>
</evidence>
<evidence type="ECO:0000312" key="17">
    <source>
        <dbReference type="EMBL" id="ADI96228.1"/>
    </source>
</evidence>
<evidence type="ECO:0000312" key="18">
    <source>
        <dbReference type="EMBL" id="ADI96231.1"/>
    </source>
</evidence>
<evidence type="ECO:0000312" key="19">
    <source>
        <dbReference type="EMBL" id="ADI96234.1"/>
    </source>
</evidence>
<evidence type="ECO:0000312" key="20">
    <source>
        <dbReference type="RGD" id="1310963"/>
    </source>
</evidence>
<evidence type="ECO:0007744" key="21">
    <source>
        <dbReference type="PDB" id="7CRV"/>
    </source>
</evidence>
<evidence type="ECO:0007744" key="22">
    <source>
        <dbReference type="PDB" id="7CRW"/>
    </source>
</evidence>
<evidence type="ECO:0007829" key="23">
    <source>
        <dbReference type="PDB" id="7CRV"/>
    </source>
</evidence>